<comment type="function">
    <text evidence="1">Protein S19 forms a complex with S13 that binds strongly to the 16S ribosomal RNA.</text>
</comment>
<comment type="similarity">
    <text evidence="1">Belongs to the universal ribosomal protein uS19 family.</text>
</comment>
<protein>
    <recommendedName>
        <fullName evidence="1">Small ribosomal subunit protein uS19</fullName>
    </recommendedName>
    <alternativeName>
        <fullName evidence="2">30S ribosomal protein S19</fullName>
    </alternativeName>
</protein>
<accession>B9KL95</accession>
<gene>
    <name evidence="1" type="primary">rpsS</name>
    <name type="ordered locus">RSKD131_0018</name>
</gene>
<keyword id="KW-0687">Ribonucleoprotein</keyword>
<keyword id="KW-0689">Ribosomal protein</keyword>
<keyword id="KW-0694">RNA-binding</keyword>
<keyword id="KW-0699">rRNA-binding</keyword>
<feature type="chain" id="PRO_1000146409" description="Small ribosomal subunit protein uS19">
    <location>
        <begin position="1"/>
        <end position="92"/>
    </location>
</feature>
<proteinExistence type="inferred from homology"/>
<name>RS19_CERSK</name>
<sequence length="92" mass="10524">MARSTWKGPFVDGYLLKKAEKSRESGKNEVIKIWSRRSTILPQFVGLTFGVYNGKKHVPVNVTEEMIGQKFGEYSPTRTYYGHAADKKAKRK</sequence>
<evidence type="ECO:0000255" key="1">
    <source>
        <dbReference type="HAMAP-Rule" id="MF_00531"/>
    </source>
</evidence>
<evidence type="ECO:0000305" key="2"/>
<organism>
    <name type="scientific">Cereibacter sphaeroides (strain KD131 / KCTC 12085)</name>
    <name type="common">Rhodobacter sphaeroides</name>
    <dbReference type="NCBI Taxonomy" id="557760"/>
    <lineage>
        <taxon>Bacteria</taxon>
        <taxon>Pseudomonadati</taxon>
        <taxon>Pseudomonadota</taxon>
        <taxon>Alphaproteobacteria</taxon>
        <taxon>Rhodobacterales</taxon>
        <taxon>Paracoccaceae</taxon>
        <taxon>Cereibacter</taxon>
    </lineage>
</organism>
<reference key="1">
    <citation type="journal article" date="2009" name="J. Bacteriol.">
        <title>Complete genome sequence of Rhodobacter sphaeroides KD131.</title>
        <authorList>
            <person name="Lim S.-K."/>
            <person name="Kim S.J."/>
            <person name="Cha S.H."/>
            <person name="Oh Y.-K."/>
            <person name="Rhee H.-J."/>
            <person name="Kim M.-S."/>
            <person name="Lee J.K."/>
        </authorList>
    </citation>
    <scope>NUCLEOTIDE SEQUENCE [LARGE SCALE GENOMIC DNA]</scope>
    <source>
        <strain>KD131 / KCTC 12085</strain>
    </source>
</reference>
<dbReference type="EMBL" id="CP001150">
    <property type="protein sequence ID" value="ACL99877.1"/>
    <property type="molecule type" value="Genomic_DNA"/>
</dbReference>
<dbReference type="RefSeq" id="WP_002722496.1">
    <property type="nucleotide sequence ID" value="NC_011963.1"/>
</dbReference>
<dbReference type="SMR" id="B9KL95"/>
<dbReference type="GeneID" id="67445504"/>
<dbReference type="KEGG" id="rsk:RSKD131_0018"/>
<dbReference type="HOGENOM" id="CLU_144911_0_1_5"/>
<dbReference type="GO" id="GO:0005737">
    <property type="term" value="C:cytoplasm"/>
    <property type="evidence" value="ECO:0007669"/>
    <property type="project" value="UniProtKB-ARBA"/>
</dbReference>
<dbReference type="GO" id="GO:0015935">
    <property type="term" value="C:small ribosomal subunit"/>
    <property type="evidence" value="ECO:0007669"/>
    <property type="project" value="InterPro"/>
</dbReference>
<dbReference type="GO" id="GO:0019843">
    <property type="term" value="F:rRNA binding"/>
    <property type="evidence" value="ECO:0007669"/>
    <property type="project" value="UniProtKB-UniRule"/>
</dbReference>
<dbReference type="GO" id="GO:0003735">
    <property type="term" value="F:structural constituent of ribosome"/>
    <property type="evidence" value="ECO:0007669"/>
    <property type="project" value="InterPro"/>
</dbReference>
<dbReference type="GO" id="GO:0000028">
    <property type="term" value="P:ribosomal small subunit assembly"/>
    <property type="evidence" value="ECO:0007669"/>
    <property type="project" value="TreeGrafter"/>
</dbReference>
<dbReference type="GO" id="GO:0006412">
    <property type="term" value="P:translation"/>
    <property type="evidence" value="ECO:0007669"/>
    <property type="project" value="UniProtKB-UniRule"/>
</dbReference>
<dbReference type="FunFam" id="3.30.860.10:FF:000001">
    <property type="entry name" value="30S ribosomal protein S19"/>
    <property type="match status" value="1"/>
</dbReference>
<dbReference type="Gene3D" id="3.30.860.10">
    <property type="entry name" value="30s Ribosomal Protein S19, Chain A"/>
    <property type="match status" value="1"/>
</dbReference>
<dbReference type="HAMAP" id="MF_00531">
    <property type="entry name" value="Ribosomal_uS19"/>
    <property type="match status" value="1"/>
</dbReference>
<dbReference type="InterPro" id="IPR002222">
    <property type="entry name" value="Ribosomal_uS19"/>
</dbReference>
<dbReference type="InterPro" id="IPR005732">
    <property type="entry name" value="Ribosomal_uS19_bac-type"/>
</dbReference>
<dbReference type="InterPro" id="IPR020934">
    <property type="entry name" value="Ribosomal_uS19_CS"/>
</dbReference>
<dbReference type="InterPro" id="IPR023575">
    <property type="entry name" value="Ribosomal_uS19_SF"/>
</dbReference>
<dbReference type="NCBIfam" id="TIGR01050">
    <property type="entry name" value="rpsS_bact"/>
    <property type="match status" value="1"/>
</dbReference>
<dbReference type="PANTHER" id="PTHR11880">
    <property type="entry name" value="RIBOSOMAL PROTEIN S19P FAMILY MEMBER"/>
    <property type="match status" value="1"/>
</dbReference>
<dbReference type="PANTHER" id="PTHR11880:SF8">
    <property type="entry name" value="SMALL RIBOSOMAL SUBUNIT PROTEIN US19M"/>
    <property type="match status" value="1"/>
</dbReference>
<dbReference type="Pfam" id="PF00203">
    <property type="entry name" value="Ribosomal_S19"/>
    <property type="match status" value="1"/>
</dbReference>
<dbReference type="PIRSF" id="PIRSF002144">
    <property type="entry name" value="Ribosomal_S19"/>
    <property type="match status" value="1"/>
</dbReference>
<dbReference type="PRINTS" id="PR00975">
    <property type="entry name" value="RIBOSOMALS19"/>
</dbReference>
<dbReference type="SUPFAM" id="SSF54570">
    <property type="entry name" value="Ribosomal protein S19"/>
    <property type="match status" value="1"/>
</dbReference>
<dbReference type="PROSITE" id="PS00323">
    <property type="entry name" value="RIBOSOMAL_S19"/>
    <property type="match status" value="1"/>
</dbReference>